<comment type="function">
    <text evidence="3">Hydrolyzes levan-type beta-(2-&gt;6)-linked fructans to fructose, but not inulin-type beta-(2-&gt;1)-linked fructans.</text>
</comment>
<comment type="catalytic activity">
    <reaction evidence="3">
        <text>Hydrolysis of terminal, non-reducing (2-&gt;6)-linked beta-D-fructofuranose residues in fructans.</text>
        <dbReference type="EC" id="3.2.1.154"/>
    </reaction>
</comment>
<comment type="activity regulation">
    <text evidence="3">Not inhibited by sucrose.</text>
</comment>
<comment type="biophysicochemical properties">
    <kinetics>
        <KM evidence="3">77 mM for 6-kestose</KM>
    </kinetics>
    <phDependence>
        <text evidence="3">Optimum pH is 5.0.</text>
    </phDependence>
    <temperatureDependence>
        <text evidence="3">Optimum temperature is 30 degrees Celsius.</text>
    </temperatureDependence>
</comment>
<comment type="similarity">
    <text evidence="2">Belongs to the glycosyl hydrolase 32 family.</text>
</comment>
<gene>
    <name evidence="5" type="primary">6-FEH</name>
</gene>
<dbReference type="EC" id="3.2.1.154"/>
<dbReference type="EMBL" id="AJ508534">
    <property type="protein sequence ID" value="CAD48404.1"/>
    <property type="molecule type" value="mRNA"/>
</dbReference>
<dbReference type="SMR" id="Q70XE6"/>
<dbReference type="CAZy" id="GH32">
    <property type="family name" value="Glycoside Hydrolase Family 32"/>
</dbReference>
<dbReference type="GlyCosmos" id="Q70XE6">
    <property type="glycosylation" value="10 sites, No reported glycans"/>
</dbReference>
<dbReference type="KEGG" id="ag:CAD48404"/>
<dbReference type="OMA" id="AIGKNSH"/>
<dbReference type="PhylomeDB" id="Q70XE6"/>
<dbReference type="BRENDA" id="3.2.1.154">
    <property type="organism ID" value="836"/>
</dbReference>
<dbReference type="GO" id="GO:0033949">
    <property type="term" value="F:fructan beta-(2,6)-fructosidase activity"/>
    <property type="evidence" value="ECO:0007669"/>
    <property type="project" value="UniProtKB-EC"/>
</dbReference>
<dbReference type="GO" id="GO:0005975">
    <property type="term" value="P:carbohydrate metabolic process"/>
    <property type="evidence" value="ECO:0007669"/>
    <property type="project" value="InterPro"/>
</dbReference>
<dbReference type="CDD" id="cd18624">
    <property type="entry name" value="GH32_Fruct1-like"/>
    <property type="match status" value="1"/>
</dbReference>
<dbReference type="FunFam" id="2.115.10.20:FF:000001">
    <property type="entry name" value="Beta-fructofuranosidase, insoluble isoenzyme CWINV1"/>
    <property type="match status" value="1"/>
</dbReference>
<dbReference type="FunFam" id="2.60.120.560:FF:000002">
    <property type="entry name" value="Beta-fructofuranosidase, insoluble isoenzyme CWINV1"/>
    <property type="match status" value="1"/>
</dbReference>
<dbReference type="Gene3D" id="2.60.120.560">
    <property type="entry name" value="Exo-inulinase, domain 1"/>
    <property type="match status" value="1"/>
</dbReference>
<dbReference type="Gene3D" id="2.115.10.20">
    <property type="entry name" value="Glycosyl hydrolase domain, family 43"/>
    <property type="match status" value="1"/>
</dbReference>
<dbReference type="InterPro" id="IPR013320">
    <property type="entry name" value="ConA-like_dom_sf"/>
</dbReference>
<dbReference type="InterPro" id="IPR050551">
    <property type="entry name" value="Fructan_Metab_Enzymes"/>
</dbReference>
<dbReference type="InterPro" id="IPR001362">
    <property type="entry name" value="Glyco_hydro_32"/>
</dbReference>
<dbReference type="InterPro" id="IPR013189">
    <property type="entry name" value="Glyco_hydro_32_C"/>
</dbReference>
<dbReference type="InterPro" id="IPR013148">
    <property type="entry name" value="Glyco_hydro_32_N"/>
</dbReference>
<dbReference type="InterPro" id="IPR023296">
    <property type="entry name" value="Glyco_hydro_beta-prop_sf"/>
</dbReference>
<dbReference type="PANTHER" id="PTHR31953">
    <property type="entry name" value="BETA-FRUCTOFURANOSIDASE, INSOLUBLE ISOENZYME CWINV1-RELATED"/>
    <property type="match status" value="1"/>
</dbReference>
<dbReference type="Pfam" id="PF08244">
    <property type="entry name" value="Glyco_hydro_32C"/>
    <property type="match status" value="1"/>
</dbReference>
<dbReference type="Pfam" id="PF00251">
    <property type="entry name" value="Glyco_hydro_32N"/>
    <property type="match status" value="1"/>
</dbReference>
<dbReference type="SMART" id="SM00640">
    <property type="entry name" value="Glyco_32"/>
    <property type="match status" value="1"/>
</dbReference>
<dbReference type="SUPFAM" id="SSF75005">
    <property type="entry name" value="Arabinanase/levansucrase/invertase"/>
    <property type="match status" value="1"/>
</dbReference>
<dbReference type="SUPFAM" id="SSF49899">
    <property type="entry name" value="Concanavalin A-like lectins/glucanases"/>
    <property type="match status" value="1"/>
</dbReference>
<keyword id="KW-1015">Disulfide bond</keyword>
<keyword id="KW-0325">Glycoprotein</keyword>
<keyword id="KW-0326">Glycosidase</keyword>
<keyword id="KW-0378">Hydrolase</keyword>
<keyword id="KW-0732">Signal</keyword>
<protein>
    <recommendedName>
        <fullName evidence="5">Fructan 6-exohydrolase</fullName>
        <ecNumber>3.2.1.154</ecNumber>
    </recommendedName>
</protein>
<accession>Q70XE6</accession>
<feature type="signal peptide" evidence="2">
    <location>
        <begin position="1"/>
        <end position="21"/>
    </location>
</feature>
<feature type="chain" id="PRO_0000395865" description="Fructan 6-exohydrolase" evidence="2">
    <location>
        <begin position="22"/>
        <end position="606"/>
    </location>
</feature>
<feature type="active site" evidence="1">
    <location>
        <position position="70"/>
    </location>
</feature>
<feature type="glycosylation site" description="N-linked (GlcNAc...) asparagine" evidence="2">
    <location>
        <position position="5"/>
    </location>
</feature>
<feature type="glycosylation site" description="N-linked (GlcNAc...) asparagine" evidence="2">
    <location>
        <position position="110"/>
    </location>
</feature>
<feature type="glycosylation site" description="N-linked (GlcNAc...) asparagine" evidence="2">
    <location>
        <position position="164"/>
    </location>
</feature>
<feature type="glycosylation site" description="N-linked (GlcNAc...) asparagine" evidence="2">
    <location>
        <position position="193"/>
    </location>
</feature>
<feature type="glycosylation site" description="N-linked (GlcNAc...) asparagine" evidence="2">
    <location>
        <position position="237"/>
    </location>
</feature>
<feature type="glycosylation site" description="N-linked (GlcNAc...) asparagine" evidence="2">
    <location>
        <position position="346"/>
    </location>
</feature>
<feature type="glycosylation site" description="N-linked (GlcNAc...) asparagine" evidence="2">
    <location>
        <position position="564"/>
    </location>
</feature>
<feature type="glycosylation site" description="N-linked (GlcNAc...) asparagine" evidence="2">
    <location>
        <position position="585"/>
    </location>
</feature>
<feature type="glycosylation site" description="N-linked (GlcNAc...) asparagine" evidence="2">
    <location>
        <position position="590"/>
    </location>
</feature>
<feature type="glycosylation site" description="N-linked (GlcNAc...) asparagine" evidence="2">
    <location>
        <position position="593"/>
    </location>
</feature>
<feature type="disulfide bond" evidence="1">
    <location>
        <begin position="445"/>
        <end position="491"/>
    </location>
</feature>
<proteinExistence type="evidence at protein level"/>
<name>6FEH_BETVU</name>
<sequence>MAPNNGSWLVLSISMMLLSHGMIIIAKDQAIHHHDDDHDDMLINDHQMINDDDPYRTAYHFQSPKNWMNDPNGPMIYKGIYHLFYQYYPYDPVWHTEIVWGHSTSTDLINWTQQPIALSPSEPYDINGCWSGSITILPQNKPVILYTGINNKNYQVQNLALPKNLSDPYLKEWIKLPQNPLMAGTPTNNNNINASSFRDPSTAWQLSDGKWRVIVGTQQGKRGLAVLFTSDDFVKWNNTGNPLHSTEGNGIWECPDFFPVYVGKSLGADTSIIGDDVKHVLKLSLFDTQYEYYTIGRYDIEKDIYVPDEGSIESDLGLRYDYGKFYASKSFFDDETNRRILWGWVNESSIQADDIKKGWSGVQAIPRTVVLDKSGKQLVQWPLAEVDMLRENDVELPSQVIKGGSLVEISQITASQADVEISFKIPESNYVEELDSTCTNPQILCSQKGASIKGRFGPFGLLTLASMGLEEYTAVFFRIFKGPNKYVVLMCSDQTRSSLNPTTDKLSFGIFVDVDPINEDLSLRILIDHSIVESFSAKGKSCITARVYPTMAINDKAKLYVFNNGTEDVKITKLSAWSMKKAQINLSTDNTSNMSYNSNKVEKEEF</sequence>
<reference evidence="4 5" key="1">
    <citation type="journal article" date="2003" name="Plant J.">
        <title>Unexpected presence of fructan 6-exohydrolases (6-FEHs) in non-fructan plants: characterization, cloning, mass mapping and functional analysis of a novel 'cell-wall invertase-like' specific 6-FEH from sugar beet (Beta vulgaris L.).</title>
        <authorList>
            <person name="Van den Ende W."/>
            <person name="De Coninck B."/>
            <person name="Clerens S."/>
            <person name="Vergauwen R."/>
            <person name="Van Laere A."/>
        </authorList>
    </citation>
    <scope>NUCLEOTIDE SEQUENCE [MRNA]</scope>
    <scope>FUNCTION</scope>
    <scope>CATALYTIC ACTIVITY</scope>
    <scope>ACTIVITY REGULATION</scope>
    <scope>BIOPHYSICOCHEMICAL PROPERTIES</scope>
    <source>
        <tissue evidence="3">Root</tissue>
    </source>
</reference>
<evidence type="ECO:0000250" key="1">
    <source>
        <dbReference type="UniProtKB" id="Q43866"/>
    </source>
</evidence>
<evidence type="ECO:0000255" key="2"/>
<evidence type="ECO:0000269" key="3">
    <source>
    </source>
</evidence>
<evidence type="ECO:0000305" key="4"/>
<evidence type="ECO:0000312" key="5">
    <source>
        <dbReference type="EMBL" id="CAD48404.1"/>
    </source>
</evidence>
<organism>
    <name type="scientific">Beta vulgaris</name>
    <name type="common">Sugar beet</name>
    <dbReference type="NCBI Taxonomy" id="161934"/>
    <lineage>
        <taxon>Eukaryota</taxon>
        <taxon>Viridiplantae</taxon>
        <taxon>Streptophyta</taxon>
        <taxon>Embryophyta</taxon>
        <taxon>Tracheophyta</taxon>
        <taxon>Spermatophyta</taxon>
        <taxon>Magnoliopsida</taxon>
        <taxon>eudicotyledons</taxon>
        <taxon>Gunneridae</taxon>
        <taxon>Pentapetalae</taxon>
        <taxon>Caryophyllales</taxon>
        <taxon>Chenopodiaceae</taxon>
        <taxon>Betoideae</taxon>
        <taxon>Beta</taxon>
    </lineage>
</organism>